<name>LEUD_MYCLB</name>
<keyword id="KW-0028">Amino-acid biosynthesis</keyword>
<keyword id="KW-0100">Branched-chain amino acid biosynthesis</keyword>
<keyword id="KW-0432">Leucine biosynthesis</keyword>
<keyword id="KW-0456">Lyase</keyword>
<feature type="chain" id="PRO_1000149421" description="3-isopropylmalate dehydratase small subunit">
    <location>
        <begin position="1"/>
        <end position="198"/>
    </location>
</feature>
<protein>
    <recommendedName>
        <fullName evidence="1">3-isopropylmalate dehydratase small subunit</fullName>
        <ecNumber evidence="1">4.2.1.33</ecNumber>
    </recommendedName>
    <alternativeName>
        <fullName evidence="1">Alpha-IPM isomerase</fullName>
        <shortName evidence="1">IPMI</shortName>
    </alternativeName>
    <alternativeName>
        <fullName evidence="1">Isopropylmalate isomerase</fullName>
    </alternativeName>
</protein>
<gene>
    <name evidence="1" type="primary">leuD</name>
    <name type="ordered locus">MLBr01684</name>
</gene>
<reference key="1">
    <citation type="journal article" date="2009" name="Nat. Genet.">
        <title>Comparative genomic and phylogeographic analysis of Mycobacterium leprae.</title>
        <authorList>
            <person name="Monot M."/>
            <person name="Honore N."/>
            <person name="Garnier T."/>
            <person name="Zidane N."/>
            <person name="Sherafi D."/>
            <person name="Paniz-Mondolfi A."/>
            <person name="Matsuoka M."/>
            <person name="Taylor G.M."/>
            <person name="Donoghue H.D."/>
            <person name="Bouwman A."/>
            <person name="Mays S."/>
            <person name="Watson C."/>
            <person name="Lockwood D."/>
            <person name="Khamispour A."/>
            <person name="Dowlati Y."/>
            <person name="Jianping S."/>
            <person name="Rea T.H."/>
            <person name="Vera-Cabrera L."/>
            <person name="Stefani M.M."/>
            <person name="Banu S."/>
            <person name="Macdonald M."/>
            <person name="Sapkota B.R."/>
            <person name="Spencer J.S."/>
            <person name="Thomas J."/>
            <person name="Harshman K."/>
            <person name="Singh P."/>
            <person name="Busso P."/>
            <person name="Gattiker A."/>
            <person name="Rougemont J."/>
            <person name="Brennan P.J."/>
            <person name="Cole S.T."/>
        </authorList>
    </citation>
    <scope>NUCLEOTIDE SEQUENCE [LARGE SCALE GENOMIC DNA]</scope>
    <source>
        <strain>Br4923</strain>
    </source>
</reference>
<comment type="function">
    <text evidence="1">Catalyzes the isomerization between 2-isopropylmalate and 3-isopropylmalate, via the formation of 2-isopropylmaleate.</text>
</comment>
<comment type="catalytic activity">
    <reaction evidence="1">
        <text>(2R,3S)-3-isopropylmalate = (2S)-2-isopropylmalate</text>
        <dbReference type="Rhea" id="RHEA:32287"/>
        <dbReference type="ChEBI" id="CHEBI:1178"/>
        <dbReference type="ChEBI" id="CHEBI:35121"/>
        <dbReference type="EC" id="4.2.1.33"/>
    </reaction>
</comment>
<comment type="pathway">
    <text evidence="1">Amino-acid biosynthesis; L-leucine biosynthesis; L-leucine from 3-methyl-2-oxobutanoate: step 2/4.</text>
</comment>
<comment type="subunit">
    <text evidence="1">Heterodimer of LeuC and LeuD.</text>
</comment>
<comment type="similarity">
    <text evidence="1">Belongs to the LeuD family. LeuD type 1 subfamily.</text>
</comment>
<accession>B8ZS11</accession>
<organism>
    <name type="scientific">Mycobacterium leprae (strain Br4923)</name>
    <dbReference type="NCBI Taxonomy" id="561304"/>
    <lineage>
        <taxon>Bacteria</taxon>
        <taxon>Bacillati</taxon>
        <taxon>Actinomycetota</taxon>
        <taxon>Actinomycetes</taxon>
        <taxon>Mycobacteriales</taxon>
        <taxon>Mycobacteriaceae</taxon>
        <taxon>Mycobacterium</taxon>
    </lineage>
</organism>
<proteinExistence type="inferred from homology"/>
<evidence type="ECO:0000255" key="1">
    <source>
        <dbReference type="HAMAP-Rule" id="MF_01031"/>
    </source>
</evidence>
<dbReference type="EC" id="4.2.1.33" evidence="1"/>
<dbReference type="EMBL" id="FM211192">
    <property type="protein sequence ID" value="CAR71779.1"/>
    <property type="molecule type" value="Genomic_DNA"/>
</dbReference>
<dbReference type="SMR" id="B8ZS11"/>
<dbReference type="KEGG" id="mlb:MLBr01684"/>
<dbReference type="HOGENOM" id="CLU_081378_0_1_11"/>
<dbReference type="UniPathway" id="UPA00048">
    <property type="reaction ID" value="UER00071"/>
</dbReference>
<dbReference type="Proteomes" id="UP000006900">
    <property type="component" value="Chromosome"/>
</dbReference>
<dbReference type="GO" id="GO:0009316">
    <property type="term" value="C:3-isopropylmalate dehydratase complex"/>
    <property type="evidence" value="ECO:0007669"/>
    <property type="project" value="InterPro"/>
</dbReference>
<dbReference type="GO" id="GO:0003861">
    <property type="term" value="F:3-isopropylmalate dehydratase activity"/>
    <property type="evidence" value="ECO:0007669"/>
    <property type="project" value="UniProtKB-UniRule"/>
</dbReference>
<dbReference type="GO" id="GO:0009098">
    <property type="term" value="P:L-leucine biosynthetic process"/>
    <property type="evidence" value="ECO:0007669"/>
    <property type="project" value="UniProtKB-UniRule"/>
</dbReference>
<dbReference type="CDD" id="cd01577">
    <property type="entry name" value="IPMI_Swivel"/>
    <property type="match status" value="1"/>
</dbReference>
<dbReference type="FunFam" id="3.20.19.10:FF:000003">
    <property type="entry name" value="3-isopropylmalate dehydratase small subunit"/>
    <property type="match status" value="1"/>
</dbReference>
<dbReference type="Gene3D" id="3.20.19.10">
    <property type="entry name" value="Aconitase, domain 4"/>
    <property type="match status" value="1"/>
</dbReference>
<dbReference type="HAMAP" id="MF_01031">
    <property type="entry name" value="LeuD_type1"/>
    <property type="match status" value="1"/>
</dbReference>
<dbReference type="InterPro" id="IPR004431">
    <property type="entry name" value="3-IsopropMal_deHydase_ssu"/>
</dbReference>
<dbReference type="InterPro" id="IPR015928">
    <property type="entry name" value="Aconitase/3IPM_dehydase_swvl"/>
</dbReference>
<dbReference type="InterPro" id="IPR000573">
    <property type="entry name" value="AconitaseA/IPMdHydase_ssu_swvl"/>
</dbReference>
<dbReference type="InterPro" id="IPR033940">
    <property type="entry name" value="IPMI_Swivel"/>
</dbReference>
<dbReference type="InterPro" id="IPR050075">
    <property type="entry name" value="LeuD"/>
</dbReference>
<dbReference type="NCBIfam" id="TIGR00171">
    <property type="entry name" value="leuD"/>
    <property type="match status" value="1"/>
</dbReference>
<dbReference type="NCBIfam" id="NF002458">
    <property type="entry name" value="PRK01641.1"/>
    <property type="match status" value="1"/>
</dbReference>
<dbReference type="PANTHER" id="PTHR43345:SF5">
    <property type="entry name" value="3-ISOPROPYLMALATE DEHYDRATASE SMALL SUBUNIT"/>
    <property type="match status" value="1"/>
</dbReference>
<dbReference type="PANTHER" id="PTHR43345">
    <property type="entry name" value="3-ISOPROPYLMALATE DEHYDRATASE SMALL SUBUNIT 2-RELATED-RELATED"/>
    <property type="match status" value="1"/>
</dbReference>
<dbReference type="Pfam" id="PF00694">
    <property type="entry name" value="Aconitase_C"/>
    <property type="match status" value="1"/>
</dbReference>
<dbReference type="SUPFAM" id="SSF52016">
    <property type="entry name" value="LeuD/IlvD-like"/>
    <property type="match status" value="1"/>
</dbReference>
<sequence length="198" mass="22136">MQAFRVHTGIGVPLRRSNVDTDQIIPAVFLKRVTRNGFEDGLFATWRVDPSFVLNLSPFDRGSVLVVGPDFGIGSSREHAVWALMDYGFRVVISSRFGDIFHGNAGKAGLLAAQVAQDDVEFLWKLIEQKPGLEITVNLQDRNINAATVVLPFKIDDYTAWRLLEGLDDIALNLRKLDEIEAFESARPAWKPRTLPTT</sequence>